<sequence>MLIKVKTLTGKEIEIDIEPTDKVDRIKERVEEKEGIPPQQQRLIFSGKQMNDDKTAADYKVQGGSVLHLVLALRGGDSILTPCV</sequence>
<protein>
    <recommendedName>
        <fullName>Ubiquitin-like protein NEDD8</fullName>
    </recommendedName>
    <alternativeName>
        <fullName>Neddylin</fullName>
    </alternativeName>
</protein>
<feature type="chain" id="PRO_0000042775" description="Ubiquitin-like protein NEDD8">
    <location>
        <begin position="1"/>
        <end position="76"/>
    </location>
</feature>
<feature type="propeptide" id="PRO_0000042776" evidence="1">
    <location>
        <begin position="77"/>
        <end position="84"/>
    </location>
</feature>
<feature type="region of interest" description="Interaction with Uba3" evidence="1">
    <location>
        <begin position="70"/>
        <end position="72"/>
    </location>
</feature>
<feature type="site" description="Interaction with Uba3" evidence="1">
    <location>
        <position position="8"/>
    </location>
</feature>
<feature type="site" description="Interaction with Uba3" evidence="1">
    <location>
        <position position="44"/>
    </location>
</feature>
<feature type="cross-link" description="Glycyl lysine isopeptide (Gly-Lys) (interchain with K-? in acceptor proteins)">
    <location>
        <position position="76"/>
    </location>
</feature>
<gene>
    <name type="primary">Nedd8</name>
    <name type="ORF">CG10679</name>
</gene>
<comment type="function">
    <text evidence="2 3 4">Ubiquitin-like protein which plays an important role in cell cycle control, embryogenesis and neurogenesis. Covalent attachment to its substrates requires prior activation by the E1 complex Uba3-Ula1 and linkage to the E2 enzyme UbcE2M. Attachment of Nedd8 to cullins activates their associated E3 ubiquitin ligase activity, and thus promotes polyubiquitination and proteasomal degradation of cyclins and other regulatory proteins.</text>
</comment>
<comment type="subunit">
    <text evidence="2 3 4">Covalently attached to cullins.</text>
</comment>
<comment type="subcellular location">
    <subcellularLocation>
        <location evidence="1">Nucleus</location>
    </subcellularLocation>
</comment>
<comment type="PTM">
    <text evidence="1">Cleavage of precursor form is necessary for function.</text>
</comment>
<comment type="disruption phenotype">
    <text evidence="2">Flies die from growth arrest in the first-instar larval stage.</text>
</comment>
<comment type="similarity">
    <text evidence="5">Belongs to the ubiquitin family.</text>
</comment>
<evidence type="ECO:0000250" key="1">
    <source>
        <dbReference type="UniProtKB" id="Q15843"/>
    </source>
</evidence>
<evidence type="ECO:0000269" key="2">
    <source>
    </source>
</evidence>
<evidence type="ECO:0000269" key="3">
    <source>
    </source>
</evidence>
<evidence type="ECO:0000269" key="4">
    <source>
    </source>
</evidence>
<evidence type="ECO:0000305" key="5"/>
<organism>
    <name type="scientific">Drosophila melanogaster</name>
    <name type="common">Fruit fly</name>
    <dbReference type="NCBI Taxonomy" id="7227"/>
    <lineage>
        <taxon>Eukaryota</taxon>
        <taxon>Metazoa</taxon>
        <taxon>Ecdysozoa</taxon>
        <taxon>Arthropoda</taxon>
        <taxon>Hexapoda</taxon>
        <taxon>Insecta</taxon>
        <taxon>Pterygota</taxon>
        <taxon>Neoptera</taxon>
        <taxon>Endopterygota</taxon>
        <taxon>Diptera</taxon>
        <taxon>Brachycera</taxon>
        <taxon>Muscomorpha</taxon>
        <taxon>Ephydroidea</taxon>
        <taxon>Drosophilidae</taxon>
        <taxon>Drosophila</taxon>
        <taxon>Sophophora</taxon>
    </lineage>
</organism>
<proteinExistence type="evidence at protein level"/>
<reference key="1">
    <citation type="journal article" date="2000" name="Science">
        <title>The genome sequence of Drosophila melanogaster.</title>
        <authorList>
            <person name="Adams M.D."/>
            <person name="Celniker S.E."/>
            <person name="Holt R.A."/>
            <person name="Evans C.A."/>
            <person name="Gocayne J.D."/>
            <person name="Amanatides P.G."/>
            <person name="Scherer S.E."/>
            <person name="Li P.W."/>
            <person name="Hoskins R.A."/>
            <person name="Galle R.F."/>
            <person name="George R.A."/>
            <person name="Lewis S.E."/>
            <person name="Richards S."/>
            <person name="Ashburner M."/>
            <person name="Henderson S.N."/>
            <person name="Sutton G.G."/>
            <person name="Wortman J.R."/>
            <person name="Yandell M.D."/>
            <person name="Zhang Q."/>
            <person name="Chen L.X."/>
            <person name="Brandon R.C."/>
            <person name="Rogers Y.-H.C."/>
            <person name="Blazej R.G."/>
            <person name="Champe M."/>
            <person name="Pfeiffer B.D."/>
            <person name="Wan K.H."/>
            <person name="Doyle C."/>
            <person name="Baxter E.G."/>
            <person name="Helt G."/>
            <person name="Nelson C.R."/>
            <person name="Miklos G.L.G."/>
            <person name="Abril J.F."/>
            <person name="Agbayani A."/>
            <person name="An H.-J."/>
            <person name="Andrews-Pfannkoch C."/>
            <person name="Baldwin D."/>
            <person name="Ballew R.M."/>
            <person name="Basu A."/>
            <person name="Baxendale J."/>
            <person name="Bayraktaroglu L."/>
            <person name="Beasley E.M."/>
            <person name="Beeson K.Y."/>
            <person name="Benos P.V."/>
            <person name="Berman B.P."/>
            <person name="Bhandari D."/>
            <person name="Bolshakov S."/>
            <person name="Borkova D."/>
            <person name="Botchan M.R."/>
            <person name="Bouck J."/>
            <person name="Brokstein P."/>
            <person name="Brottier P."/>
            <person name="Burtis K.C."/>
            <person name="Busam D.A."/>
            <person name="Butler H."/>
            <person name="Cadieu E."/>
            <person name="Center A."/>
            <person name="Chandra I."/>
            <person name="Cherry J.M."/>
            <person name="Cawley S."/>
            <person name="Dahlke C."/>
            <person name="Davenport L.B."/>
            <person name="Davies P."/>
            <person name="de Pablos B."/>
            <person name="Delcher A."/>
            <person name="Deng Z."/>
            <person name="Mays A.D."/>
            <person name="Dew I."/>
            <person name="Dietz S.M."/>
            <person name="Dodson K."/>
            <person name="Doup L.E."/>
            <person name="Downes M."/>
            <person name="Dugan-Rocha S."/>
            <person name="Dunkov B.C."/>
            <person name="Dunn P."/>
            <person name="Durbin K.J."/>
            <person name="Evangelista C.C."/>
            <person name="Ferraz C."/>
            <person name="Ferriera S."/>
            <person name="Fleischmann W."/>
            <person name="Fosler C."/>
            <person name="Gabrielian A.E."/>
            <person name="Garg N.S."/>
            <person name="Gelbart W.M."/>
            <person name="Glasser K."/>
            <person name="Glodek A."/>
            <person name="Gong F."/>
            <person name="Gorrell J.H."/>
            <person name="Gu Z."/>
            <person name="Guan P."/>
            <person name="Harris M."/>
            <person name="Harris N.L."/>
            <person name="Harvey D.A."/>
            <person name="Heiman T.J."/>
            <person name="Hernandez J.R."/>
            <person name="Houck J."/>
            <person name="Hostin D."/>
            <person name="Houston K.A."/>
            <person name="Howland T.J."/>
            <person name="Wei M.-H."/>
            <person name="Ibegwam C."/>
            <person name="Jalali M."/>
            <person name="Kalush F."/>
            <person name="Karpen G.H."/>
            <person name="Ke Z."/>
            <person name="Kennison J.A."/>
            <person name="Ketchum K.A."/>
            <person name="Kimmel B.E."/>
            <person name="Kodira C.D."/>
            <person name="Kraft C.L."/>
            <person name="Kravitz S."/>
            <person name="Kulp D."/>
            <person name="Lai Z."/>
            <person name="Lasko P."/>
            <person name="Lei Y."/>
            <person name="Levitsky A.A."/>
            <person name="Li J.H."/>
            <person name="Li Z."/>
            <person name="Liang Y."/>
            <person name="Lin X."/>
            <person name="Liu X."/>
            <person name="Mattei B."/>
            <person name="McIntosh T.C."/>
            <person name="McLeod M.P."/>
            <person name="McPherson D."/>
            <person name="Merkulov G."/>
            <person name="Milshina N.V."/>
            <person name="Mobarry C."/>
            <person name="Morris J."/>
            <person name="Moshrefi A."/>
            <person name="Mount S.M."/>
            <person name="Moy M."/>
            <person name="Murphy B."/>
            <person name="Murphy L."/>
            <person name="Muzny D.M."/>
            <person name="Nelson D.L."/>
            <person name="Nelson D.R."/>
            <person name="Nelson K.A."/>
            <person name="Nixon K."/>
            <person name="Nusskern D.R."/>
            <person name="Pacleb J.M."/>
            <person name="Palazzolo M."/>
            <person name="Pittman G.S."/>
            <person name="Pan S."/>
            <person name="Pollard J."/>
            <person name="Puri V."/>
            <person name="Reese M.G."/>
            <person name="Reinert K."/>
            <person name="Remington K."/>
            <person name="Saunders R.D.C."/>
            <person name="Scheeler F."/>
            <person name="Shen H."/>
            <person name="Shue B.C."/>
            <person name="Siden-Kiamos I."/>
            <person name="Simpson M."/>
            <person name="Skupski M.P."/>
            <person name="Smith T.J."/>
            <person name="Spier E."/>
            <person name="Spradling A.C."/>
            <person name="Stapleton M."/>
            <person name="Strong R."/>
            <person name="Sun E."/>
            <person name="Svirskas R."/>
            <person name="Tector C."/>
            <person name="Turner R."/>
            <person name="Venter E."/>
            <person name="Wang A.H."/>
            <person name="Wang X."/>
            <person name="Wang Z.-Y."/>
            <person name="Wassarman D.A."/>
            <person name="Weinstock G.M."/>
            <person name="Weissenbach J."/>
            <person name="Williams S.M."/>
            <person name="Woodage T."/>
            <person name="Worley K.C."/>
            <person name="Wu D."/>
            <person name="Yang S."/>
            <person name="Yao Q.A."/>
            <person name="Ye J."/>
            <person name="Yeh R.-F."/>
            <person name="Zaveri J.S."/>
            <person name="Zhan M."/>
            <person name="Zhang G."/>
            <person name="Zhao Q."/>
            <person name="Zheng L."/>
            <person name="Zheng X.H."/>
            <person name="Zhong F.N."/>
            <person name="Zhong W."/>
            <person name="Zhou X."/>
            <person name="Zhu S.C."/>
            <person name="Zhu X."/>
            <person name="Smith H.O."/>
            <person name="Gibbs R.A."/>
            <person name="Myers E.W."/>
            <person name="Rubin G.M."/>
            <person name="Venter J.C."/>
        </authorList>
    </citation>
    <scope>NUCLEOTIDE SEQUENCE [LARGE SCALE GENOMIC DNA]</scope>
    <source>
        <strain>Berkeley</strain>
    </source>
</reference>
<reference key="2">
    <citation type="journal article" date="2002" name="Genome Biol.">
        <title>Annotation of the Drosophila melanogaster euchromatic genome: a systematic review.</title>
        <authorList>
            <person name="Misra S."/>
            <person name="Crosby M.A."/>
            <person name="Mungall C.J."/>
            <person name="Matthews B.B."/>
            <person name="Campbell K.S."/>
            <person name="Hradecky P."/>
            <person name="Huang Y."/>
            <person name="Kaminker J.S."/>
            <person name="Millburn G.H."/>
            <person name="Prochnik S.E."/>
            <person name="Smith C.D."/>
            <person name="Tupy J.L."/>
            <person name="Whitfield E.J."/>
            <person name="Bayraktaroglu L."/>
            <person name="Berman B.P."/>
            <person name="Bettencourt B.R."/>
            <person name="Celniker S.E."/>
            <person name="de Grey A.D.N.J."/>
            <person name="Drysdale R.A."/>
            <person name="Harris N.L."/>
            <person name="Richter J."/>
            <person name="Russo S."/>
            <person name="Schroeder A.J."/>
            <person name="Shu S.Q."/>
            <person name="Stapleton M."/>
            <person name="Yamada C."/>
            <person name="Ashburner M."/>
            <person name="Gelbart W.M."/>
            <person name="Rubin G.M."/>
            <person name="Lewis S.E."/>
        </authorList>
    </citation>
    <scope>GENOME REANNOTATION</scope>
    <source>
        <strain>Berkeley</strain>
    </source>
</reference>
<reference key="3">
    <citation type="submission" date="2006-01" db="EMBL/GenBank/DDBJ databases">
        <authorList>
            <person name="Stapleton M."/>
            <person name="Carlson J.W."/>
            <person name="Chavez C."/>
            <person name="Frise E."/>
            <person name="George R.A."/>
            <person name="Pacleb J.M."/>
            <person name="Park S."/>
            <person name="Wan K.H."/>
            <person name="Yu C."/>
            <person name="Celniker S.E."/>
        </authorList>
    </citation>
    <scope>NUCLEOTIDE SEQUENCE [LARGE SCALE MRNA]</scope>
</reference>
<reference key="4">
    <citation type="journal article" date="2002" name="Genes Dev.">
        <title>Distinct protein degradation mechanisms mediated by Cul1 and Cul3 controlling Ci stability in Drosophila eye development.</title>
        <authorList>
            <person name="Ou C.-Y."/>
            <person name="Lin Y.-F."/>
            <person name="Chen Y.-J."/>
            <person name="Chien C.-T."/>
        </authorList>
    </citation>
    <scope>FUNCTION</scope>
    <scope>SUBUNIT</scope>
    <scope>DISRUPTION PHENOTYPE</scope>
</reference>
<reference key="5">
    <citation type="journal article" date="2005" name="J. Neurosci.">
        <title>Requirement of Cul3 for axonal arborization and dendritic elaboration in Drosophila mushroom body neurons.</title>
        <authorList>
            <person name="Zhu S."/>
            <person name="Perez R."/>
            <person name="Pan M."/>
            <person name="Lee T."/>
        </authorList>
    </citation>
    <scope>FUNCTION</scope>
    <scope>SUBUNIT</scope>
</reference>
<reference key="6">
    <citation type="journal article" date="2005" name="Nat. Cell Biol.">
        <title>Neddylation and deneddylation regulate Cul1 and Cul3 protein accumulation.</title>
        <authorList>
            <person name="Wu J.-T."/>
            <person name="Lin H.-C."/>
            <person name="Hu Y.-C."/>
            <person name="Chien C.-T."/>
        </authorList>
    </citation>
    <scope>FUNCTION</scope>
    <scope>SUBUNIT</scope>
</reference>
<name>NEDD8_DROME</name>
<accession>Q9VJ33</accession>
<accession>Q29QE5</accession>
<keyword id="KW-0217">Developmental protein</keyword>
<keyword id="KW-1017">Isopeptide bond</keyword>
<keyword id="KW-0539">Nucleus</keyword>
<keyword id="KW-1185">Reference proteome</keyword>
<keyword id="KW-0833">Ubl conjugation pathway</keyword>
<dbReference type="EMBL" id="AE014134">
    <property type="protein sequence ID" value="AAF53724.1"/>
    <property type="molecule type" value="Genomic_DNA"/>
</dbReference>
<dbReference type="EMBL" id="BT024445">
    <property type="protein sequence ID" value="ABC86507.1"/>
    <property type="molecule type" value="mRNA"/>
</dbReference>
<dbReference type="RefSeq" id="NP_001286070.1">
    <property type="nucleotide sequence ID" value="NM_001299141.1"/>
</dbReference>
<dbReference type="RefSeq" id="NP_609919.1">
    <property type="nucleotide sequence ID" value="NM_136075.3"/>
</dbReference>
<dbReference type="SMR" id="Q9VJ33"/>
<dbReference type="BioGRID" id="61142">
    <property type="interactions" value="9"/>
</dbReference>
<dbReference type="FunCoup" id="Q9VJ33">
    <property type="interactions" value="2933"/>
</dbReference>
<dbReference type="IntAct" id="Q9VJ33">
    <property type="interactions" value="8"/>
</dbReference>
<dbReference type="STRING" id="7227.FBpp0309711"/>
<dbReference type="PaxDb" id="7227-FBpp0080733"/>
<dbReference type="DNASU" id="35151"/>
<dbReference type="EnsemblMetazoa" id="FBtr0081192">
    <property type="protein sequence ID" value="FBpp0080733"/>
    <property type="gene ID" value="FBgn0032725"/>
</dbReference>
<dbReference type="EnsemblMetazoa" id="FBtr0342928">
    <property type="protein sequence ID" value="FBpp0309711"/>
    <property type="gene ID" value="FBgn0032725"/>
</dbReference>
<dbReference type="GeneID" id="35151"/>
<dbReference type="KEGG" id="dme:Dmel_CG10679"/>
<dbReference type="AGR" id="FB:FBgn0032725"/>
<dbReference type="CTD" id="4738"/>
<dbReference type="FlyBase" id="FBgn0032725">
    <property type="gene designation" value="Nedd8"/>
</dbReference>
<dbReference type="VEuPathDB" id="VectorBase:FBgn0032725"/>
<dbReference type="eggNOG" id="KOG0005">
    <property type="taxonomic scope" value="Eukaryota"/>
</dbReference>
<dbReference type="HOGENOM" id="CLU_010412_6_4_1"/>
<dbReference type="InParanoid" id="Q9VJ33"/>
<dbReference type="OMA" id="YAGKQMA"/>
<dbReference type="OrthoDB" id="428577at2759"/>
<dbReference type="PhylomeDB" id="Q9VJ33"/>
<dbReference type="Reactome" id="R-DME-2173789">
    <property type="pathway name" value="TGF-beta receptor signaling activates SMADs"/>
</dbReference>
<dbReference type="Reactome" id="R-DME-5689603">
    <property type="pathway name" value="UCH proteinases"/>
</dbReference>
<dbReference type="Reactome" id="R-DME-8856825">
    <property type="pathway name" value="Cargo recognition for clathrin-mediated endocytosis"/>
</dbReference>
<dbReference type="Reactome" id="R-DME-8951664">
    <property type="pathway name" value="Neddylation"/>
</dbReference>
<dbReference type="Reactome" id="R-DME-917937">
    <property type="pathway name" value="Iron uptake and transport"/>
</dbReference>
<dbReference type="SignaLink" id="Q9VJ33"/>
<dbReference type="BioGRID-ORCS" id="35151">
    <property type="hits" value="0 hits in 1 CRISPR screen"/>
</dbReference>
<dbReference type="GenomeRNAi" id="35151"/>
<dbReference type="PRO" id="PR:Q9VJ33"/>
<dbReference type="Proteomes" id="UP000000803">
    <property type="component" value="Chromosome 2L"/>
</dbReference>
<dbReference type="Bgee" id="FBgn0032725">
    <property type="expression patterns" value="Expressed in spermatocyte in testis and 171 other cell types or tissues"/>
</dbReference>
<dbReference type="ExpressionAtlas" id="Q9VJ33">
    <property type="expression patterns" value="baseline and differential"/>
</dbReference>
<dbReference type="GO" id="GO:0005737">
    <property type="term" value="C:cytoplasm"/>
    <property type="evidence" value="ECO:0000318"/>
    <property type="project" value="GO_Central"/>
</dbReference>
<dbReference type="GO" id="GO:0005634">
    <property type="term" value="C:nucleus"/>
    <property type="evidence" value="ECO:0000250"/>
    <property type="project" value="UniProtKB"/>
</dbReference>
<dbReference type="GO" id="GO:0031386">
    <property type="term" value="F:protein tag activity"/>
    <property type="evidence" value="ECO:0000314"/>
    <property type="project" value="FlyBase"/>
</dbReference>
<dbReference type="GO" id="GO:0031625">
    <property type="term" value="F:ubiquitin protein ligase binding"/>
    <property type="evidence" value="ECO:0000318"/>
    <property type="project" value="GO_Central"/>
</dbReference>
<dbReference type="GO" id="GO:0008283">
    <property type="term" value="P:cell population proliferation"/>
    <property type="evidence" value="ECO:0000315"/>
    <property type="project" value="UniProtKB"/>
</dbReference>
<dbReference type="GO" id="GO:0036099">
    <property type="term" value="P:female germ-line stem cell population maintenance"/>
    <property type="evidence" value="ECO:0000315"/>
    <property type="project" value="FlyBase"/>
</dbReference>
<dbReference type="GO" id="GO:0019941">
    <property type="term" value="P:modification-dependent protein catabolic process"/>
    <property type="evidence" value="ECO:0000318"/>
    <property type="project" value="GO_Central"/>
</dbReference>
<dbReference type="GO" id="GO:0045879">
    <property type="term" value="P:negative regulation of smoothened signaling pathway"/>
    <property type="evidence" value="ECO:0000315"/>
    <property type="project" value="FlyBase"/>
</dbReference>
<dbReference type="GO" id="GO:0045116">
    <property type="term" value="P:protein neddylation"/>
    <property type="evidence" value="ECO:0000315"/>
    <property type="project" value="FlyBase"/>
</dbReference>
<dbReference type="GO" id="GO:0031647">
    <property type="term" value="P:regulation of protein stability"/>
    <property type="evidence" value="ECO:0000315"/>
    <property type="project" value="UniProtKB"/>
</dbReference>
<dbReference type="GO" id="GO:0030162">
    <property type="term" value="P:regulation of proteolysis"/>
    <property type="evidence" value="ECO:0000315"/>
    <property type="project" value="UniProtKB"/>
</dbReference>
<dbReference type="GO" id="GO:0008589">
    <property type="term" value="P:regulation of smoothened signaling pathway"/>
    <property type="evidence" value="ECO:0000315"/>
    <property type="project" value="UniProtKB"/>
</dbReference>
<dbReference type="GO" id="GO:2000736">
    <property type="term" value="P:regulation of stem cell differentiation"/>
    <property type="evidence" value="ECO:0000315"/>
    <property type="project" value="FlyBase"/>
</dbReference>
<dbReference type="GO" id="GO:0051438">
    <property type="term" value="P:regulation of ubiquitin-protein transferase activity"/>
    <property type="evidence" value="ECO:0000315"/>
    <property type="project" value="UniProtKB"/>
</dbReference>
<dbReference type="GO" id="GO:0030431">
    <property type="term" value="P:sleep"/>
    <property type="evidence" value="ECO:0000315"/>
    <property type="project" value="FlyBase"/>
</dbReference>
<dbReference type="CDD" id="cd01806">
    <property type="entry name" value="Ubl_NEDD8"/>
    <property type="match status" value="1"/>
</dbReference>
<dbReference type="FunFam" id="3.10.20.90:FF:000023">
    <property type="entry name" value="NEDD8 protein"/>
    <property type="match status" value="1"/>
</dbReference>
<dbReference type="Gene3D" id="3.10.20.90">
    <property type="entry name" value="Phosphatidylinositol 3-kinase Catalytic Subunit, Chain A, domain 1"/>
    <property type="match status" value="1"/>
</dbReference>
<dbReference type="InterPro" id="IPR038738">
    <property type="entry name" value="Nedd8-like"/>
</dbReference>
<dbReference type="InterPro" id="IPR000626">
    <property type="entry name" value="Ubiquitin-like_dom"/>
</dbReference>
<dbReference type="InterPro" id="IPR029071">
    <property type="entry name" value="Ubiquitin-like_domsf"/>
</dbReference>
<dbReference type="InterPro" id="IPR019954">
    <property type="entry name" value="Ubiquitin_CS"/>
</dbReference>
<dbReference type="InterPro" id="IPR019956">
    <property type="entry name" value="Ubiquitin_dom"/>
</dbReference>
<dbReference type="InterPro" id="IPR050158">
    <property type="entry name" value="Ubiquitin_ubiquitin-like"/>
</dbReference>
<dbReference type="PANTHER" id="PTHR10666">
    <property type="entry name" value="UBIQUITIN"/>
    <property type="match status" value="1"/>
</dbReference>
<dbReference type="Pfam" id="PF00240">
    <property type="entry name" value="ubiquitin"/>
    <property type="match status" value="1"/>
</dbReference>
<dbReference type="PRINTS" id="PR00348">
    <property type="entry name" value="UBIQUITIN"/>
</dbReference>
<dbReference type="SMART" id="SM00213">
    <property type="entry name" value="UBQ"/>
    <property type="match status" value="1"/>
</dbReference>
<dbReference type="SUPFAM" id="SSF54236">
    <property type="entry name" value="Ubiquitin-like"/>
    <property type="match status" value="1"/>
</dbReference>
<dbReference type="PROSITE" id="PS00299">
    <property type="entry name" value="UBIQUITIN_1"/>
    <property type="match status" value="1"/>
</dbReference>
<dbReference type="PROSITE" id="PS50053">
    <property type="entry name" value="UBIQUITIN_2"/>
    <property type="match status" value="1"/>
</dbReference>